<accession>Q32JK2</accession>
<dbReference type="EC" id="6.3.4.20" evidence="1"/>
<dbReference type="EMBL" id="CP000034">
    <property type="protein sequence ID" value="ABB60505.1"/>
    <property type="molecule type" value="Genomic_DNA"/>
</dbReference>
<dbReference type="RefSeq" id="WP_000817241.1">
    <property type="nucleotide sequence ID" value="NC_007606.1"/>
</dbReference>
<dbReference type="RefSeq" id="YP_401994.1">
    <property type="nucleotide sequence ID" value="NC_007606.1"/>
</dbReference>
<dbReference type="SMR" id="Q32JK2"/>
<dbReference type="STRING" id="300267.SDY_0286"/>
<dbReference type="EnsemblBacteria" id="ABB60505">
    <property type="protein sequence ID" value="ABB60505"/>
    <property type="gene ID" value="SDY_0286"/>
</dbReference>
<dbReference type="KEGG" id="sdy:SDY_0286"/>
<dbReference type="PATRIC" id="fig|300267.13.peg.331"/>
<dbReference type="HOGENOM" id="CLU_081854_0_0_6"/>
<dbReference type="UniPathway" id="UPA00391"/>
<dbReference type="Proteomes" id="UP000002716">
    <property type="component" value="Chromosome"/>
</dbReference>
<dbReference type="GO" id="GO:0005524">
    <property type="term" value="F:ATP binding"/>
    <property type="evidence" value="ECO:0007669"/>
    <property type="project" value="UniProtKB-UniRule"/>
</dbReference>
<dbReference type="GO" id="GO:0016879">
    <property type="term" value="F:ligase activity, forming carbon-nitrogen bonds"/>
    <property type="evidence" value="ECO:0007669"/>
    <property type="project" value="UniProtKB-UniRule"/>
</dbReference>
<dbReference type="GO" id="GO:0008270">
    <property type="term" value="F:zinc ion binding"/>
    <property type="evidence" value="ECO:0007669"/>
    <property type="project" value="UniProtKB-UniRule"/>
</dbReference>
<dbReference type="GO" id="GO:0008616">
    <property type="term" value="P:queuosine biosynthetic process"/>
    <property type="evidence" value="ECO:0007669"/>
    <property type="project" value="UniProtKB-UniRule"/>
</dbReference>
<dbReference type="CDD" id="cd01995">
    <property type="entry name" value="QueC-like"/>
    <property type="match status" value="1"/>
</dbReference>
<dbReference type="FunFam" id="3.40.50.620:FF:000017">
    <property type="entry name" value="7-cyano-7-deazaguanine synthase"/>
    <property type="match status" value="1"/>
</dbReference>
<dbReference type="Gene3D" id="3.40.50.620">
    <property type="entry name" value="HUPs"/>
    <property type="match status" value="1"/>
</dbReference>
<dbReference type="HAMAP" id="MF_01633">
    <property type="entry name" value="QueC"/>
    <property type="match status" value="1"/>
</dbReference>
<dbReference type="InterPro" id="IPR018317">
    <property type="entry name" value="QueC"/>
</dbReference>
<dbReference type="InterPro" id="IPR014729">
    <property type="entry name" value="Rossmann-like_a/b/a_fold"/>
</dbReference>
<dbReference type="NCBIfam" id="TIGR00364">
    <property type="entry name" value="7-cyano-7-deazaguanine synthase QueC"/>
    <property type="match status" value="1"/>
</dbReference>
<dbReference type="NCBIfam" id="NF008317">
    <property type="entry name" value="PRK11106.1"/>
    <property type="match status" value="1"/>
</dbReference>
<dbReference type="PANTHER" id="PTHR42914">
    <property type="entry name" value="7-CYANO-7-DEAZAGUANINE SYNTHASE"/>
    <property type="match status" value="1"/>
</dbReference>
<dbReference type="PANTHER" id="PTHR42914:SF1">
    <property type="entry name" value="7-CYANO-7-DEAZAGUANINE SYNTHASE"/>
    <property type="match status" value="1"/>
</dbReference>
<dbReference type="Pfam" id="PF06508">
    <property type="entry name" value="QueC"/>
    <property type="match status" value="1"/>
</dbReference>
<dbReference type="PIRSF" id="PIRSF006293">
    <property type="entry name" value="ExsB"/>
    <property type="match status" value="1"/>
</dbReference>
<dbReference type="SUPFAM" id="SSF52402">
    <property type="entry name" value="Adenine nucleotide alpha hydrolases-like"/>
    <property type="match status" value="1"/>
</dbReference>
<organism>
    <name type="scientific">Shigella dysenteriae serotype 1 (strain Sd197)</name>
    <dbReference type="NCBI Taxonomy" id="300267"/>
    <lineage>
        <taxon>Bacteria</taxon>
        <taxon>Pseudomonadati</taxon>
        <taxon>Pseudomonadota</taxon>
        <taxon>Gammaproteobacteria</taxon>
        <taxon>Enterobacterales</taxon>
        <taxon>Enterobacteriaceae</taxon>
        <taxon>Shigella</taxon>
    </lineage>
</organism>
<comment type="function">
    <text evidence="1">Catalyzes the ATP-dependent conversion of 7-carboxy-7-deazaguanine (CDG) to 7-cyano-7-deazaguanine (preQ(0)).</text>
</comment>
<comment type="catalytic activity">
    <reaction evidence="1">
        <text>7-carboxy-7-deazaguanine + NH4(+) + ATP = 7-cyano-7-deazaguanine + ADP + phosphate + H2O + H(+)</text>
        <dbReference type="Rhea" id="RHEA:27982"/>
        <dbReference type="ChEBI" id="CHEBI:15377"/>
        <dbReference type="ChEBI" id="CHEBI:15378"/>
        <dbReference type="ChEBI" id="CHEBI:28938"/>
        <dbReference type="ChEBI" id="CHEBI:30616"/>
        <dbReference type="ChEBI" id="CHEBI:43474"/>
        <dbReference type="ChEBI" id="CHEBI:45075"/>
        <dbReference type="ChEBI" id="CHEBI:61036"/>
        <dbReference type="ChEBI" id="CHEBI:456216"/>
        <dbReference type="EC" id="6.3.4.20"/>
    </reaction>
</comment>
<comment type="cofactor">
    <cofactor evidence="1">
        <name>Zn(2+)</name>
        <dbReference type="ChEBI" id="CHEBI:29105"/>
    </cofactor>
    <text evidence="1">Binds 1 zinc ion per subunit.</text>
</comment>
<comment type="pathway">
    <text evidence="1">Purine metabolism; 7-cyano-7-deazaguanine biosynthesis.</text>
</comment>
<comment type="similarity">
    <text evidence="1">Belongs to the QueC family.</text>
</comment>
<name>QUEC_SHIDS</name>
<feature type="chain" id="PRO_0000246923" description="7-cyano-7-deazaguanine synthase">
    <location>
        <begin position="1"/>
        <end position="231"/>
    </location>
</feature>
<feature type="binding site" evidence="1">
    <location>
        <begin position="8"/>
        <end position="18"/>
    </location>
    <ligand>
        <name>ATP</name>
        <dbReference type="ChEBI" id="CHEBI:30616"/>
    </ligand>
</feature>
<feature type="binding site" evidence="1">
    <location>
        <position position="188"/>
    </location>
    <ligand>
        <name>Zn(2+)</name>
        <dbReference type="ChEBI" id="CHEBI:29105"/>
    </ligand>
</feature>
<feature type="binding site" evidence="1">
    <location>
        <position position="197"/>
    </location>
    <ligand>
        <name>Zn(2+)</name>
        <dbReference type="ChEBI" id="CHEBI:29105"/>
    </ligand>
</feature>
<feature type="binding site" evidence="1">
    <location>
        <position position="200"/>
    </location>
    <ligand>
        <name>Zn(2+)</name>
        <dbReference type="ChEBI" id="CHEBI:29105"/>
    </ligand>
</feature>
<feature type="binding site" evidence="1">
    <location>
        <position position="203"/>
    </location>
    <ligand>
        <name>Zn(2+)</name>
        <dbReference type="ChEBI" id="CHEBI:29105"/>
    </ligand>
</feature>
<gene>
    <name evidence="1" type="primary">queC</name>
    <name type="ordered locus">SDY_0286</name>
</gene>
<protein>
    <recommendedName>
        <fullName evidence="1">7-cyano-7-deazaguanine synthase</fullName>
        <ecNumber evidence="1">6.3.4.20</ecNumber>
    </recommendedName>
    <alternativeName>
        <fullName evidence="1">7-cyano-7-carbaguanine synthase</fullName>
    </alternativeName>
    <alternativeName>
        <fullName evidence="1">PreQ(0) synthase</fullName>
    </alternativeName>
    <alternativeName>
        <fullName evidence="1">Queuosine biosynthesis protein QueC</fullName>
    </alternativeName>
</protein>
<evidence type="ECO:0000255" key="1">
    <source>
        <dbReference type="HAMAP-Rule" id="MF_01633"/>
    </source>
</evidence>
<reference key="1">
    <citation type="journal article" date="2005" name="Nucleic Acids Res.">
        <title>Genome dynamics and diversity of Shigella species, the etiologic agents of bacillary dysentery.</title>
        <authorList>
            <person name="Yang F."/>
            <person name="Yang J."/>
            <person name="Zhang X."/>
            <person name="Chen L."/>
            <person name="Jiang Y."/>
            <person name="Yan Y."/>
            <person name="Tang X."/>
            <person name="Wang J."/>
            <person name="Xiong Z."/>
            <person name="Dong J."/>
            <person name="Xue Y."/>
            <person name="Zhu Y."/>
            <person name="Xu X."/>
            <person name="Sun L."/>
            <person name="Chen S."/>
            <person name="Nie H."/>
            <person name="Peng J."/>
            <person name="Xu J."/>
            <person name="Wang Y."/>
            <person name="Yuan Z."/>
            <person name="Wen Y."/>
            <person name="Yao Z."/>
            <person name="Shen Y."/>
            <person name="Qiang B."/>
            <person name="Hou Y."/>
            <person name="Yu J."/>
            <person name="Jin Q."/>
        </authorList>
    </citation>
    <scope>NUCLEOTIDE SEQUENCE [LARGE SCALE GENOMIC DNA]</scope>
    <source>
        <strain>Sd197</strain>
    </source>
</reference>
<keyword id="KW-0067">ATP-binding</keyword>
<keyword id="KW-0436">Ligase</keyword>
<keyword id="KW-0479">Metal-binding</keyword>
<keyword id="KW-0547">Nucleotide-binding</keyword>
<keyword id="KW-0671">Queuosine biosynthesis</keyword>
<keyword id="KW-1185">Reference proteome</keyword>
<keyword id="KW-0862">Zinc</keyword>
<sequence>MKRAVVVFSGGQDSTTCLVQALQQYDEVHCVTFDYGQRHRAEIDVARELALKLGARAHKVLDVTLLNELAVSSLTRDSIPVPDYEPEADGIPNTFVPGRNILFLTLAAIYAYQVKAEAVITGVCETDFSGYPDCRDEFVKALNHAVSLGMAKHIRFETPLMWIDKAETWALADYYGKLDLVRNETLTCYNGIKGDGCGHCAACNLRANGLNHYLADKPTVMAAMKQKTGLK</sequence>
<proteinExistence type="inferred from homology"/>